<protein>
    <recommendedName>
        <fullName evidence="1">Sulfate adenylyltransferase subunit 2</fullName>
        <ecNumber evidence="1">2.7.7.4</ecNumber>
    </recommendedName>
    <alternativeName>
        <fullName evidence="1">ATP-sulfurylase small subunit</fullName>
    </alternativeName>
    <alternativeName>
        <fullName evidence="1">Sulfate adenylate transferase</fullName>
        <shortName evidence="1">SAT</shortName>
    </alternativeName>
</protein>
<accession>Q7D0L8</accession>
<dbReference type="EC" id="2.7.7.4" evidence="1"/>
<dbReference type="EMBL" id="AE007869">
    <property type="protein sequence ID" value="AAK86624.2"/>
    <property type="molecule type" value="Genomic_DNA"/>
</dbReference>
<dbReference type="RefSeq" id="NP_353839.2">
    <property type="nucleotide sequence ID" value="NC_003062.2"/>
</dbReference>
<dbReference type="RefSeq" id="WP_006310264.1">
    <property type="nucleotide sequence ID" value="NC_003062.2"/>
</dbReference>
<dbReference type="SMR" id="Q7D0L8"/>
<dbReference type="STRING" id="176299.Atu0817"/>
<dbReference type="EnsemblBacteria" id="AAK86624">
    <property type="protein sequence ID" value="AAK86624"/>
    <property type="gene ID" value="Atu0817"/>
</dbReference>
<dbReference type="GeneID" id="1132855"/>
<dbReference type="KEGG" id="atu:Atu0817"/>
<dbReference type="PATRIC" id="fig|176299.10.peg.814"/>
<dbReference type="eggNOG" id="COG0175">
    <property type="taxonomic scope" value="Bacteria"/>
</dbReference>
<dbReference type="HOGENOM" id="CLU_043026_0_0_5"/>
<dbReference type="OrthoDB" id="9772604at2"/>
<dbReference type="PhylomeDB" id="Q7D0L8"/>
<dbReference type="BioCyc" id="AGRO:ATU0817-MONOMER"/>
<dbReference type="UniPathway" id="UPA00140">
    <property type="reaction ID" value="UER00204"/>
</dbReference>
<dbReference type="Proteomes" id="UP000000813">
    <property type="component" value="Chromosome circular"/>
</dbReference>
<dbReference type="GO" id="GO:0005524">
    <property type="term" value="F:ATP binding"/>
    <property type="evidence" value="ECO:0007669"/>
    <property type="project" value="UniProtKB-KW"/>
</dbReference>
<dbReference type="GO" id="GO:0004781">
    <property type="term" value="F:sulfate adenylyltransferase (ATP) activity"/>
    <property type="evidence" value="ECO:0007669"/>
    <property type="project" value="UniProtKB-UniRule"/>
</dbReference>
<dbReference type="GO" id="GO:0070814">
    <property type="term" value="P:hydrogen sulfide biosynthetic process"/>
    <property type="evidence" value="ECO:0007669"/>
    <property type="project" value="UniProtKB-UniRule"/>
</dbReference>
<dbReference type="GO" id="GO:0000103">
    <property type="term" value="P:sulfate assimilation"/>
    <property type="evidence" value="ECO:0007669"/>
    <property type="project" value="UniProtKB-UniRule"/>
</dbReference>
<dbReference type="FunFam" id="3.40.50.620:FF:000002">
    <property type="entry name" value="Sulfate adenylyltransferase subunit 2"/>
    <property type="match status" value="1"/>
</dbReference>
<dbReference type="Gene3D" id="3.40.50.620">
    <property type="entry name" value="HUPs"/>
    <property type="match status" value="1"/>
</dbReference>
<dbReference type="HAMAP" id="MF_00064">
    <property type="entry name" value="Sulf_adenylyltr_sub2"/>
    <property type="match status" value="1"/>
</dbReference>
<dbReference type="InterPro" id="IPR002500">
    <property type="entry name" value="PAPS_reduct_dom"/>
</dbReference>
<dbReference type="InterPro" id="IPR014729">
    <property type="entry name" value="Rossmann-like_a/b/a_fold"/>
</dbReference>
<dbReference type="InterPro" id="IPR011784">
    <property type="entry name" value="SO4_adenylTrfase_ssu"/>
</dbReference>
<dbReference type="InterPro" id="IPR050128">
    <property type="entry name" value="Sulfate_adenylyltrnsfr_sub2"/>
</dbReference>
<dbReference type="NCBIfam" id="TIGR02039">
    <property type="entry name" value="CysD"/>
    <property type="match status" value="1"/>
</dbReference>
<dbReference type="NCBIfam" id="NF003587">
    <property type="entry name" value="PRK05253.1"/>
    <property type="match status" value="1"/>
</dbReference>
<dbReference type="NCBIfam" id="NF009214">
    <property type="entry name" value="PRK12563.1"/>
    <property type="match status" value="1"/>
</dbReference>
<dbReference type="PANTHER" id="PTHR43196">
    <property type="entry name" value="SULFATE ADENYLYLTRANSFERASE SUBUNIT 2"/>
    <property type="match status" value="1"/>
</dbReference>
<dbReference type="PANTHER" id="PTHR43196:SF1">
    <property type="entry name" value="SULFATE ADENYLYLTRANSFERASE SUBUNIT 2"/>
    <property type="match status" value="1"/>
</dbReference>
<dbReference type="Pfam" id="PF01507">
    <property type="entry name" value="PAPS_reduct"/>
    <property type="match status" value="1"/>
</dbReference>
<dbReference type="PIRSF" id="PIRSF002936">
    <property type="entry name" value="CysDAde_trans"/>
    <property type="match status" value="1"/>
</dbReference>
<dbReference type="SUPFAM" id="SSF52402">
    <property type="entry name" value="Adenine nucleotide alpha hydrolases-like"/>
    <property type="match status" value="1"/>
</dbReference>
<comment type="function">
    <text evidence="1">With CysN forms the ATP sulfurylase (ATPS) that catalyzes the adenylation of sulfate producing adenosine 5'-phosphosulfate (APS) and diphosphate, the first enzymatic step in sulfur assimilation pathway. APS synthesis involves the formation of a high-energy phosphoric-sulfuric acid anhydride bond driven by GTP hydrolysis by CysN coupled to ATP hydrolysis by CysD.</text>
</comment>
<comment type="catalytic activity">
    <reaction evidence="1">
        <text>sulfate + ATP + H(+) = adenosine 5'-phosphosulfate + diphosphate</text>
        <dbReference type="Rhea" id="RHEA:18133"/>
        <dbReference type="ChEBI" id="CHEBI:15378"/>
        <dbReference type="ChEBI" id="CHEBI:16189"/>
        <dbReference type="ChEBI" id="CHEBI:30616"/>
        <dbReference type="ChEBI" id="CHEBI:33019"/>
        <dbReference type="ChEBI" id="CHEBI:58243"/>
        <dbReference type="EC" id="2.7.7.4"/>
    </reaction>
</comment>
<comment type="pathway">
    <text evidence="1">Sulfur metabolism; hydrogen sulfide biosynthesis; sulfite from sulfate: step 1/3.</text>
</comment>
<comment type="subunit">
    <text evidence="1">Heterodimer composed of CysD, the smaller subunit, and CysN.</text>
</comment>
<comment type="similarity">
    <text evidence="1">Belongs to the PAPS reductase family. CysD subfamily.</text>
</comment>
<feature type="chain" id="PRO_1000057435" description="Sulfate adenylyltransferase subunit 2">
    <location>
        <begin position="1"/>
        <end position="317"/>
    </location>
</feature>
<feature type="region of interest" description="Disordered" evidence="2">
    <location>
        <begin position="1"/>
        <end position="21"/>
    </location>
</feature>
<feature type="region of interest" description="Disordered" evidence="2">
    <location>
        <begin position="298"/>
        <end position="317"/>
    </location>
</feature>
<feature type="compositionally biased region" description="Basic and acidic residues" evidence="2">
    <location>
        <begin position="1"/>
        <end position="10"/>
    </location>
</feature>
<sequence length="317" mass="36292">MSNAVHETDSKNTVASKPPLDPHLKALENEAIHIFREVAAEFDNPVMLYSIGKDSSVLLHLARKAFFPGRIPFPLLHVNTGWKFKEMIEFRDNIVKEYDLDLISYTNPRGALENVTPFSHGSALYTDIMKTEALRQALDAGQFDAAFGGARRDEEASRAKERIYSFRTPDHKWDPRNQRPELWNIYNGMVRKGESVRAFPLSNWTEVDIWRYIEAENIPLVPLYYAAERPYIERDGMMILAEDERLELLPGEEIKHGSIRFRTLGCFPLTGAIRSEAATLQDVIAELEIATVSERQGRAIDRDQSGSMEKKKREGYF</sequence>
<gene>
    <name evidence="1" type="primary">cysD</name>
    <name type="ordered locus">Atu0817</name>
    <name type="ORF">AGR_C_1496</name>
</gene>
<name>CYSD_AGRFC</name>
<reference key="1">
    <citation type="journal article" date="2001" name="Science">
        <title>The genome of the natural genetic engineer Agrobacterium tumefaciens C58.</title>
        <authorList>
            <person name="Wood D.W."/>
            <person name="Setubal J.C."/>
            <person name="Kaul R."/>
            <person name="Monks D.E."/>
            <person name="Kitajima J.P."/>
            <person name="Okura V.K."/>
            <person name="Zhou Y."/>
            <person name="Chen L."/>
            <person name="Wood G.E."/>
            <person name="Almeida N.F. Jr."/>
            <person name="Woo L."/>
            <person name="Chen Y."/>
            <person name="Paulsen I.T."/>
            <person name="Eisen J.A."/>
            <person name="Karp P.D."/>
            <person name="Bovee D. Sr."/>
            <person name="Chapman P."/>
            <person name="Clendenning J."/>
            <person name="Deatherage G."/>
            <person name="Gillet W."/>
            <person name="Grant C."/>
            <person name="Kutyavin T."/>
            <person name="Levy R."/>
            <person name="Li M.-J."/>
            <person name="McClelland E."/>
            <person name="Palmieri A."/>
            <person name="Raymond C."/>
            <person name="Rouse G."/>
            <person name="Saenphimmachak C."/>
            <person name="Wu Z."/>
            <person name="Romero P."/>
            <person name="Gordon D."/>
            <person name="Zhang S."/>
            <person name="Yoo H."/>
            <person name="Tao Y."/>
            <person name="Biddle P."/>
            <person name="Jung M."/>
            <person name="Krespan W."/>
            <person name="Perry M."/>
            <person name="Gordon-Kamm B."/>
            <person name="Liao L."/>
            <person name="Kim S."/>
            <person name="Hendrick C."/>
            <person name="Zhao Z.-Y."/>
            <person name="Dolan M."/>
            <person name="Chumley F."/>
            <person name="Tingey S.V."/>
            <person name="Tomb J.-F."/>
            <person name="Gordon M.P."/>
            <person name="Olson M.V."/>
            <person name="Nester E.W."/>
        </authorList>
    </citation>
    <scope>NUCLEOTIDE SEQUENCE [LARGE SCALE GENOMIC DNA]</scope>
    <source>
        <strain>C58 / ATCC 33970</strain>
    </source>
</reference>
<reference key="2">
    <citation type="journal article" date="2001" name="Science">
        <title>Genome sequence of the plant pathogen and biotechnology agent Agrobacterium tumefaciens C58.</title>
        <authorList>
            <person name="Goodner B."/>
            <person name="Hinkle G."/>
            <person name="Gattung S."/>
            <person name="Miller N."/>
            <person name="Blanchard M."/>
            <person name="Qurollo B."/>
            <person name="Goldman B.S."/>
            <person name="Cao Y."/>
            <person name="Askenazi M."/>
            <person name="Halling C."/>
            <person name="Mullin L."/>
            <person name="Houmiel K."/>
            <person name="Gordon J."/>
            <person name="Vaudin M."/>
            <person name="Iartchouk O."/>
            <person name="Epp A."/>
            <person name="Liu F."/>
            <person name="Wollam C."/>
            <person name="Allinger M."/>
            <person name="Doughty D."/>
            <person name="Scott C."/>
            <person name="Lappas C."/>
            <person name="Markelz B."/>
            <person name="Flanagan C."/>
            <person name="Crowell C."/>
            <person name="Gurson J."/>
            <person name="Lomo C."/>
            <person name="Sear C."/>
            <person name="Strub G."/>
            <person name="Cielo C."/>
            <person name="Slater S."/>
        </authorList>
    </citation>
    <scope>NUCLEOTIDE SEQUENCE [LARGE SCALE GENOMIC DNA]</scope>
    <source>
        <strain>C58 / ATCC 33970</strain>
    </source>
</reference>
<evidence type="ECO:0000255" key="1">
    <source>
        <dbReference type="HAMAP-Rule" id="MF_00064"/>
    </source>
</evidence>
<evidence type="ECO:0000256" key="2">
    <source>
        <dbReference type="SAM" id="MobiDB-lite"/>
    </source>
</evidence>
<keyword id="KW-0067">ATP-binding</keyword>
<keyword id="KW-0547">Nucleotide-binding</keyword>
<keyword id="KW-0548">Nucleotidyltransferase</keyword>
<keyword id="KW-1185">Reference proteome</keyword>
<keyword id="KW-0808">Transferase</keyword>
<organism>
    <name type="scientific">Agrobacterium fabrum (strain C58 / ATCC 33970)</name>
    <name type="common">Agrobacterium tumefaciens (strain C58)</name>
    <dbReference type="NCBI Taxonomy" id="176299"/>
    <lineage>
        <taxon>Bacteria</taxon>
        <taxon>Pseudomonadati</taxon>
        <taxon>Pseudomonadota</taxon>
        <taxon>Alphaproteobacteria</taxon>
        <taxon>Hyphomicrobiales</taxon>
        <taxon>Rhizobiaceae</taxon>
        <taxon>Rhizobium/Agrobacterium group</taxon>
        <taxon>Agrobacterium</taxon>
        <taxon>Agrobacterium tumefaciens complex</taxon>
    </lineage>
</organism>
<proteinExistence type="inferred from homology"/>